<sequence>MKFVLLFGVLLVTLFSYSSAEMLDDFDQADEDELLSLIEKEEARAKECTPRFYDCSHDRHSCCRSELFKDVCTCFYPEGGDNEVCTCQQPKHLKYMEKAADKAKKFGGKIKKWFG</sequence>
<accession>B6DCQ5</accession>
<name>TX310_LYCSI</name>
<evidence type="ECO:0000250" key="1"/>
<evidence type="ECO:0000255" key="2"/>
<evidence type="ECO:0000305" key="3"/>
<proteinExistence type="evidence at transcript level"/>
<protein>
    <recommendedName>
        <fullName>U3-lycotoxin-Ls1a</fullName>
    </recommendedName>
    <alternativeName>
        <fullName>Toxin-like structure LSTX-B10</fullName>
    </alternativeName>
</protein>
<organism>
    <name type="scientific">Lycosa singoriensis</name>
    <name type="common">Wolf spider</name>
    <name type="synonym">Aranea singoriensis</name>
    <dbReference type="NCBI Taxonomy" id="434756"/>
    <lineage>
        <taxon>Eukaryota</taxon>
        <taxon>Metazoa</taxon>
        <taxon>Ecdysozoa</taxon>
        <taxon>Arthropoda</taxon>
        <taxon>Chelicerata</taxon>
        <taxon>Arachnida</taxon>
        <taxon>Araneae</taxon>
        <taxon>Araneomorphae</taxon>
        <taxon>Entelegynae</taxon>
        <taxon>Lycosoidea</taxon>
        <taxon>Lycosidae</taxon>
        <taxon>Lycosa</taxon>
    </lineage>
</organism>
<keyword id="KW-1015">Disulfide bond</keyword>
<keyword id="KW-0960">Knottin</keyword>
<keyword id="KW-0964">Secreted</keyword>
<keyword id="KW-0732">Signal</keyword>
<keyword id="KW-0800">Toxin</keyword>
<comment type="subcellular location">
    <subcellularLocation>
        <location evidence="1">Secreted</location>
    </subcellularLocation>
</comment>
<comment type="tissue specificity">
    <text>Expressed by the venom gland.</text>
</comment>
<comment type="domain">
    <text evidence="1">The presence of a 'disulfide through disulfide knot' structurally defines this protein as a knottin.</text>
</comment>
<comment type="similarity">
    <text evidence="3">Belongs to the neurotoxin 19 (CSTX) family. 01 subfamily.</text>
</comment>
<dbReference type="EMBL" id="EU925989">
    <property type="protein sequence ID" value="ACI41321.1"/>
    <property type="molecule type" value="mRNA"/>
</dbReference>
<dbReference type="EMBL" id="FM863993">
    <property type="protein sequence ID" value="CAS03591.1"/>
    <property type="molecule type" value="mRNA"/>
</dbReference>
<dbReference type="SMR" id="B6DCQ5"/>
<dbReference type="ArachnoServer" id="AS000938">
    <property type="toxin name" value="U3-lycotoxin-Ls1a"/>
</dbReference>
<dbReference type="GO" id="GO:0005576">
    <property type="term" value="C:extracellular region"/>
    <property type="evidence" value="ECO:0007669"/>
    <property type="project" value="UniProtKB-SubCell"/>
</dbReference>
<dbReference type="GO" id="GO:0090729">
    <property type="term" value="F:toxin activity"/>
    <property type="evidence" value="ECO:0007669"/>
    <property type="project" value="UniProtKB-KW"/>
</dbReference>
<dbReference type="InterPro" id="IPR019553">
    <property type="entry name" value="Spider_toxin_CSTX_knottin"/>
</dbReference>
<dbReference type="InterPro" id="IPR011142">
    <property type="entry name" value="Spider_toxin_CSTX_Knottin_CS"/>
</dbReference>
<dbReference type="Pfam" id="PF10530">
    <property type="entry name" value="Toxin_35"/>
    <property type="match status" value="1"/>
</dbReference>
<dbReference type="PROSITE" id="PS60029">
    <property type="entry name" value="SPIDER_CSTX"/>
    <property type="match status" value="1"/>
</dbReference>
<reference key="1">
    <citation type="journal article" date="2010" name="Zoology">
        <title>Transcriptome analysis of the venom glands of the Chinese wolf spider Lycosa singoriensis.</title>
        <authorList>
            <person name="Zhang Y."/>
            <person name="Chen J."/>
            <person name="Tang X."/>
            <person name="Wang F."/>
            <person name="Jiang L."/>
            <person name="Xiong X."/>
            <person name="Wang M."/>
            <person name="Rong M."/>
            <person name="Liu Z."/>
            <person name="Liang S."/>
        </authorList>
    </citation>
    <scope>NUCLEOTIDE SEQUENCE [LARGE SCALE MRNA]</scope>
    <source>
        <tissue>Venom gland</tissue>
    </source>
</reference>
<feature type="signal peptide" evidence="2">
    <location>
        <begin position="1"/>
        <end position="20"/>
    </location>
</feature>
<feature type="propeptide" id="PRO_0000401625" evidence="1">
    <location>
        <begin position="21"/>
        <end position="44"/>
    </location>
</feature>
<feature type="chain" id="PRO_0000401626" description="U3-lycotoxin-Ls1a">
    <location>
        <begin position="45"/>
        <end position="115"/>
    </location>
</feature>
<feature type="disulfide bond" evidence="1">
    <location>
        <begin position="48"/>
        <end position="63"/>
    </location>
</feature>
<feature type="disulfide bond" evidence="1">
    <location>
        <begin position="55"/>
        <end position="72"/>
    </location>
</feature>
<feature type="disulfide bond" evidence="1">
    <location>
        <begin position="62"/>
        <end position="87"/>
    </location>
</feature>
<feature type="disulfide bond" evidence="1">
    <location>
        <begin position="74"/>
        <end position="85"/>
    </location>
</feature>